<name>UBIG_CERS4</name>
<sequence length="247" mass="27285">MESSSTIDPAEVAKFEAMAAEWWNPHGKFKPLHQMNPCRLDYITQQIAAEFDRDLSAPLPFEGLRLLDIGCGGGLLSEPMARLGAEVIGADAAPRNIPVAKLHAEQSGLTIDYRNTTAEALAAAGERFDVVLNMEVVEHVADPLTYLTACRELLKPGGLMICSTLNRNPKSFAMAIVGAEWVMRWLPKGTHDWSKFITPDELYDLIRKAGLDPVDRKGMVFNPVSWSWSLSARDLSVNYVTASVRRS</sequence>
<protein>
    <recommendedName>
        <fullName evidence="1">Ubiquinone biosynthesis O-methyltransferase</fullName>
    </recommendedName>
    <alternativeName>
        <fullName evidence="1">2-polyprenyl-6-hydroxyphenol methylase</fullName>
        <ecNumber evidence="1">2.1.1.222</ecNumber>
    </alternativeName>
    <alternativeName>
        <fullName evidence="1">3-demethylubiquinone 3-O-methyltransferase</fullName>
        <ecNumber evidence="1">2.1.1.64</ecNumber>
    </alternativeName>
</protein>
<comment type="function">
    <text evidence="1">O-methyltransferase that catalyzes the 2 O-methylation steps in the ubiquinone biosynthetic pathway.</text>
</comment>
<comment type="catalytic activity">
    <reaction evidence="1">
        <text>a 3-demethylubiquinol + S-adenosyl-L-methionine = a ubiquinol + S-adenosyl-L-homocysteine + H(+)</text>
        <dbReference type="Rhea" id="RHEA:44380"/>
        <dbReference type="Rhea" id="RHEA-COMP:9566"/>
        <dbReference type="Rhea" id="RHEA-COMP:10914"/>
        <dbReference type="ChEBI" id="CHEBI:15378"/>
        <dbReference type="ChEBI" id="CHEBI:17976"/>
        <dbReference type="ChEBI" id="CHEBI:57856"/>
        <dbReference type="ChEBI" id="CHEBI:59789"/>
        <dbReference type="ChEBI" id="CHEBI:84422"/>
        <dbReference type="EC" id="2.1.1.64"/>
    </reaction>
</comment>
<comment type="catalytic activity">
    <reaction evidence="1">
        <text>a 3-(all-trans-polyprenyl)benzene-1,2-diol + S-adenosyl-L-methionine = a 2-methoxy-6-(all-trans-polyprenyl)phenol + S-adenosyl-L-homocysteine + H(+)</text>
        <dbReference type="Rhea" id="RHEA:31411"/>
        <dbReference type="Rhea" id="RHEA-COMP:9550"/>
        <dbReference type="Rhea" id="RHEA-COMP:9551"/>
        <dbReference type="ChEBI" id="CHEBI:15378"/>
        <dbReference type="ChEBI" id="CHEBI:57856"/>
        <dbReference type="ChEBI" id="CHEBI:59789"/>
        <dbReference type="ChEBI" id="CHEBI:62729"/>
        <dbReference type="ChEBI" id="CHEBI:62731"/>
        <dbReference type="EC" id="2.1.1.222"/>
    </reaction>
</comment>
<comment type="pathway">
    <text evidence="1">Cofactor biosynthesis; ubiquinone biosynthesis.</text>
</comment>
<comment type="similarity">
    <text evidence="1">Belongs to the methyltransferase superfamily. UbiG/COQ3 family.</text>
</comment>
<feature type="chain" id="PRO_0000241726" description="Ubiquinone biosynthesis O-methyltransferase">
    <location>
        <begin position="1"/>
        <end position="247"/>
    </location>
</feature>
<feature type="binding site" evidence="1">
    <location>
        <position position="39"/>
    </location>
    <ligand>
        <name>S-adenosyl-L-methionine</name>
        <dbReference type="ChEBI" id="CHEBI:59789"/>
    </ligand>
</feature>
<feature type="binding site" evidence="1">
    <location>
        <position position="70"/>
    </location>
    <ligand>
        <name>S-adenosyl-L-methionine</name>
        <dbReference type="ChEBI" id="CHEBI:59789"/>
    </ligand>
</feature>
<feature type="binding site" evidence="1">
    <location>
        <position position="91"/>
    </location>
    <ligand>
        <name>S-adenosyl-L-methionine</name>
        <dbReference type="ChEBI" id="CHEBI:59789"/>
    </ligand>
</feature>
<feature type="binding site" evidence="1">
    <location>
        <position position="134"/>
    </location>
    <ligand>
        <name>S-adenosyl-L-methionine</name>
        <dbReference type="ChEBI" id="CHEBI:59789"/>
    </ligand>
</feature>
<dbReference type="EC" id="2.1.1.222" evidence="1"/>
<dbReference type="EC" id="2.1.1.64" evidence="1"/>
<dbReference type="EMBL" id="CP000143">
    <property type="protein sequence ID" value="ABA80359.1"/>
    <property type="molecule type" value="Genomic_DNA"/>
</dbReference>
<dbReference type="RefSeq" id="WP_011338766.1">
    <property type="nucleotide sequence ID" value="NC_007493.2"/>
</dbReference>
<dbReference type="RefSeq" id="YP_354260.1">
    <property type="nucleotide sequence ID" value="NC_007493.2"/>
</dbReference>
<dbReference type="SMR" id="Q3IYM5"/>
<dbReference type="STRING" id="272943.RSP_1175"/>
<dbReference type="EnsemblBacteria" id="ABA80359">
    <property type="protein sequence ID" value="ABA80359"/>
    <property type="gene ID" value="RSP_1175"/>
</dbReference>
<dbReference type="GeneID" id="3718168"/>
<dbReference type="KEGG" id="rsp:RSP_1175"/>
<dbReference type="PATRIC" id="fig|272943.9.peg.3154"/>
<dbReference type="eggNOG" id="COG2227">
    <property type="taxonomic scope" value="Bacteria"/>
</dbReference>
<dbReference type="OrthoDB" id="9801538at2"/>
<dbReference type="PhylomeDB" id="Q3IYM5"/>
<dbReference type="BioCyc" id="MetaCyc:MONOMER-20134"/>
<dbReference type="BRENDA" id="2.1.1.222">
    <property type="organism ID" value="5383"/>
</dbReference>
<dbReference type="UniPathway" id="UPA00232"/>
<dbReference type="Proteomes" id="UP000002703">
    <property type="component" value="Chromosome 1"/>
</dbReference>
<dbReference type="GO" id="GO:0102208">
    <property type="term" value="F:2-polyprenyl-6-hydroxyphenol methylase activity"/>
    <property type="evidence" value="ECO:0007669"/>
    <property type="project" value="UniProtKB-EC"/>
</dbReference>
<dbReference type="GO" id="GO:0061542">
    <property type="term" value="F:3-demethylubiquinol 3-O-methyltransferase activity"/>
    <property type="evidence" value="ECO:0007669"/>
    <property type="project" value="UniProtKB-UniRule"/>
</dbReference>
<dbReference type="GO" id="GO:0010420">
    <property type="term" value="F:polyprenyldihydroxybenzoate methyltransferase activity"/>
    <property type="evidence" value="ECO:0007669"/>
    <property type="project" value="InterPro"/>
</dbReference>
<dbReference type="GO" id="GO:0032259">
    <property type="term" value="P:methylation"/>
    <property type="evidence" value="ECO:0007669"/>
    <property type="project" value="UniProtKB-KW"/>
</dbReference>
<dbReference type="CDD" id="cd02440">
    <property type="entry name" value="AdoMet_MTases"/>
    <property type="match status" value="1"/>
</dbReference>
<dbReference type="Gene3D" id="3.40.50.150">
    <property type="entry name" value="Vaccinia Virus protein VP39"/>
    <property type="match status" value="1"/>
</dbReference>
<dbReference type="HAMAP" id="MF_00472">
    <property type="entry name" value="UbiG"/>
    <property type="match status" value="1"/>
</dbReference>
<dbReference type="InterPro" id="IPR029063">
    <property type="entry name" value="SAM-dependent_MTases_sf"/>
</dbReference>
<dbReference type="InterPro" id="IPR010233">
    <property type="entry name" value="UbiG_MeTrfase"/>
</dbReference>
<dbReference type="NCBIfam" id="TIGR01983">
    <property type="entry name" value="UbiG"/>
    <property type="match status" value="1"/>
</dbReference>
<dbReference type="PANTHER" id="PTHR43464">
    <property type="entry name" value="METHYLTRANSFERASE"/>
    <property type="match status" value="1"/>
</dbReference>
<dbReference type="PANTHER" id="PTHR43464:SF19">
    <property type="entry name" value="UBIQUINONE BIOSYNTHESIS O-METHYLTRANSFERASE, MITOCHONDRIAL"/>
    <property type="match status" value="1"/>
</dbReference>
<dbReference type="Pfam" id="PF13489">
    <property type="entry name" value="Methyltransf_23"/>
    <property type="match status" value="1"/>
</dbReference>
<dbReference type="SUPFAM" id="SSF53335">
    <property type="entry name" value="S-adenosyl-L-methionine-dependent methyltransferases"/>
    <property type="match status" value="1"/>
</dbReference>
<reference key="1">
    <citation type="submission" date="2005-09" db="EMBL/GenBank/DDBJ databases">
        <title>Complete sequence of chromosome 1 of Rhodobacter sphaeroides 2.4.1.</title>
        <authorList>
            <person name="Copeland A."/>
            <person name="Lucas S."/>
            <person name="Lapidus A."/>
            <person name="Barry K."/>
            <person name="Detter J.C."/>
            <person name="Glavina T."/>
            <person name="Hammon N."/>
            <person name="Israni S."/>
            <person name="Pitluck S."/>
            <person name="Richardson P."/>
            <person name="Mackenzie C."/>
            <person name="Choudhary M."/>
            <person name="Larimer F."/>
            <person name="Hauser L.J."/>
            <person name="Land M."/>
            <person name="Donohue T.J."/>
            <person name="Kaplan S."/>
        </authorList>
    </citation>
    <scope>NUCLEOTIDE SEQUENCE [LARGE SCALE GENOMIC DNA]</scope>
    <source>
        <strain>ATCC 17023 / DSM 158 / JCM 6121 / CCUG 31486 / LMG 2827 / NBRC 12203 / NCIMB 8253 / ATH 2.4.1.</strain>
    </source>
</reference>
<proteinExistence type="inferred from homology"/>
<accession>Q3IYM5</accession>
<keyword id="KW-0489">Methyltransferase</keyword>
<keyword id="KW-1185">Reference proteome</keyword>
<keyword id="KW-0949">S-adenosyl-L-methionine</keyword>
<keyword id="KW-0808">Transferase</keyword>
<keyword id="KW-0831">Ubiquinone biosynthesis</keyword>
<organism>
    <name type="scientific">Cereibacter sphaeroides (strain ATCC 17023 / DSM 158 / JCM 6121 / CCUG 31486 / LMG 2827 / NBRC 12203 / NCIMB 8253 / ATH 2.4.1.)</name>
    <name type="common">Rhodobacter sphaeroides</name>
    <dbReference type="NCBI Taxonomy" id="272943"/>
    <lineage>
        <taxon>Bacteria</taxon>
        <taxon>Pseudomonadati</taxon>
        <taxon>Pseudomonadota</taxon>
        <taxon>Alphaproteobacteria</taxon>
        <taxon>Rhodobacterales</taxon>
        <taxon>Paracoccaceae</taxon>
        <taxon>Cereibacter</taxon>
    </lineage>
</organism>
<evidence type="ECO:0000255" key="1">
    <source>
        <dbReference type="HAMAP-Rule" id="MF_00472"/>
    </source>
</evidence>
<gene>
    <name evidence="1" type="primary">ubiG</name>
    <name type="ordered locus">RHOS4_27910</name>
    <name type="ordered locus">RSP_1175</name>
</gene>